<keyword id="KW-1003">Cell membrane</keyword>
<keyword id="KW-0472">Membrane</keyword>
<keyword id="KW-0812">Transmembrane</keyword>
<keyword id="KW-1133">Transmembrane helix</keyword>
<reference key="1">
    <citation type="journal article" date="2008" name="Chem. Biol. Interact.">
        <title>Extending the Bacillus cereus group genomics to putative food-borne pathogens of different toxicity.</title>
        <authorList>
            <person name="Lapidus A."/>
            <person name="Goltsman E."/>
            <person name="Auger S."/>
            <person name="Galleron N."/>
            <person name="Segurens B."/>
            <person name="Dossat C."/>
            <person name="Land M.L."/>
            <person name="Broussolle V."/>
            <person name="Brillard J."/>
            <person name="Guinebretiere M.-H."/>
            <person name="Sanchis V."/>
            <person name="Nguen-the C."/>
            <person name="Lereclus D."/>
            <person name="Richardson P."/>
            <person name="Wincker P."/>
            <person name="Weissenbach J."/>
            <person name="Ehrlich S.D."/>
            <person name="Sorokin A."/>
        </authorList>
    </citation>
    <scope>NUCLEOTIDE SEQUENCE [LARGE SCALE GENOMIC DNA]</scope>
    <source>
        <strain>DSM 22905 / CIP 110041 / 391-98 / NVH 391-98</strain>
    </source>
</reference>
<feature type="chain" id="PRO_1000079571" description="UPF0154 protein Bcer98_2334">
    <location>
        <begin position="1"/>
        <end position="72"/>
    </location>
</feature>
<feature type="transmembrane region" description="Helical" evidence="1">
    <location>
        <begin position="3"/>
        <end position="23"/>
    </location>
</feature>
<dbReference type="EMBL" id="CP000764">
    <property type="protein sequence ID" value="ABS22580.1"/>
    <property type="molecule type" value="Genomic_DNA"/>
</dbReference>
<dbReference type="RefSeq" id="WP_012094776.1">
    <property type="nucleotide sequence ID" value="NC_009674.1"/>
</dbReference>
<dbReference type="SMR" id="A7GR22"/>
<dbReference type="STRING" id="315749.Bcer98_2334"/>
<dbReference type="GeneID" id="33897604"/>
<dbReference type="KEGG" id="bcy:Bcer98_2334"/>
<dbReference type="eggNOG" id="COG3763">
    <property type="taxonomic scope" value="Bacteria"/>
</dbReference>
<dbReference type="HOGENOM" id="CLU_180108_0_1_9"/>
<dbReference type="Proteomes" id="UP000002300">
    <property type="component" value="Chromosome"/>
</dbReference>
<dbReference type="GO" id="GO:0005886">
    <property type="term" value="C:plasma membrane"/>
    <property type="evidence" value="ECO:0007669"/>
    <property type="project" value="UniProtKB-SubCell"/>
</dbReference>
<dbReference type="HAMAP" id="MF_00363">
    <property type="entry name" value="UPF0154"/>
    <property type="match status" value="1"/>
</dbReference>
<dbReference type="InterPro" id="IPR005359">
    <property type="entry name" value="UPF0154"/>
</dbReference>
<dbReference type="NCBIfam" id="NF002503">
    <property type="entry name" value="PRK01844.1"/>
    <property type="match status" value="1"/>
</dbReference>
<dbReference type="Pfam" id="PF03672">
    <property type="entry name" value="UPF0154"/>
    <property type="match status" value="1"/>
</dbReference>
<protein>
    <recommendedName>
        <fullName evidence="1">UPF0154 protein Bcer98_2334</fullName>
    </recommendedName>
</protein>
<gene>
    <name type="ordered locus">Bcer98_2334</name>
</gene>
<proteinExistence type="inferred from homology"/>
<name>Y2334_BACCN</name>
<sequence length="72" mass="8240">MPIWSGILVGVVALLAGVALGFFIARKYMMNYLQKNPPINEQMLKMMMMQMGQKPSQKKINQMMSAMNKQMK</sequence>
<evidence type="ECO:0000255" key="1">
    <source>
        <dbReference type="HAMAP-Rule" id="MF_00363"/>
    </source>
</evidence>
<organism>
    <name type="scientific">Bacillus cytotoxicus (strain DSM 22905 / CIP 110041 / 391-98 / NVH 391-98)</name>
    <dbReference type="NCBI Taxonomy" id="315749"/>
    <lineage>
        <taxon>Bacteria</taxon>
        <taxon>Bacillati</taxon>
        <taxon>Bacillota</taxon>
        <taxon>Bacilli</taxon>
        <taxon>Bacillales</taxon>
        <taxon>Bacillaceae</taxon>
        <taxon>Bacillus</taxon>
        <taxon>Bacillus cereus group</taxon>
    </lineage>
</organism>
<accession>A7GR22</accession>
<comment type="subcellular location">
    <subcellularLocation>
        <location evidence="1">Cell membrane</location>
        <topology evidence="1">Single-pass membrane protein</topology>
    </subcellularLocation>
</comment>
<comment type="similarity">
    <text evidence="1">Belongs to the UPF0154 family.</text>
</comment>